<feature type="signal peptide" evidence="2">
    <location>
        <begin position="1"/>
        <end position="22"/>
    </location>
</feature>
<feature type="chain" id="PRO_0000016816" description="Ephrin type-A receptor 6">
    <location>
        <begin position="23"/>
        <end position="1035"/>
    </location>
</feature>
<feature type="topological domain" description="Extracellular" evidence="2">
    <location>
        <begin position="23"/>
        <end position="549"/>
    </location>
</feature>
<feature type="transmembrane region" description="Helical" evidence="2">
    <location>
        <begin position="550"/>
        <end position="570"/>
    </location>
</feature>
<feature type="topological domain" description="Cytoplasmic" evidence="2">
    <location>
        <begin position="571"/>
        <end position="1035"/>
    </location>
</feature>
<feature type="domain" description="Eph LBD" evidence="6">
    <location>
        <begin position="33"/>
        <end position="211"/>
    </location>
</feature>
<feature type="domain" description="Fibronectin type-III 1" evidence="5">
    <location>
        <begin position="330"/>
        <end position="440"/>
    </location>
</feature>
<feature type="domain" description="Fibronectin type-III 2" evidence="5">
    <location>
        <begin position="441"/>
        <end position="536"/>
    </location>
</feature>
<feature type="domain" description="Protein kinase" evidence="3">
    <location>
        <begin position="630"/>
        <end position="943"/>
    </location>
</feature>
<feature type="domain" description="SAM" evidence="4">
    <location>
        <begin position="960"/>
        <end position="1024"/>
    </location>
</feature>
<feature type="short sequence motif" description="PDZ-binding" evidence="2">
    <location>
        <begin position="1033"/>
        <end position="1035"/>
    </location>
</feature>
<feature type="active site" description="Proton acceptor" evidence="3 7">
    <location>
        <position position="797"/>
    </location>
</feature>
<feature type="binding site" evidence="3">
    <location>
        <begin position="636"/>
        <end position="644"/>
    </location>
    <ligand>
        <name>ATP</name>
        <dbReference type="ChEBI" id="CHEBI:30616"/>
    </ligand>
</feature>
<feature type="binding site" evidence="3">
    <location>
        <position position="662"/>
    </location>
    <ligand>
        <name>ATP</name>
        <dbReference type="ChEBI" id="CHEBI:30616"/>
    </ligand>
</feature>
<feature type="modified residue" description="Phosphotyrosine; by autocatalysis" evidence="2">
    <location>
        <position position="605"/>
    </location>
</feature>
<feature type="modified residue" description="Phosphotyrosine; by autocatalysis" evidence="2">
    <location>
        <position position="611"/>
    </location>
</feature>
<feature type="modified residue" description="Phosphotyrosine; by autocatalysis" evidence="2">
    <location>
        <position position="830"/>
    </location>
</feature>
<feature type="modified residue" description="Phosphotyrosine; by autocatalysis" evidence="2">
    <location>
        <position position="977"/>
    </location>
</feature>
<feature type="glycosylation site" description="N-linked (GlcNAc...) asparagine" evidence="2">
    <location>
        <position position="342"/>
    </location>
</feature>
<feature type="glycosylation site" description="N-linked (GlcNAc...) asparagine" evidence="2">
    <location>
        <position position="396"/>
    </location>
</feature>
<feature type="glycosylation site" description="N-linked (GlcNAc...) asparagine" evidence="2">
    <location>
        <position position="409"/>
    </location>
</feature>
<feature type="sequence conflict" description="In Ref. 1; AAB53836." evidence="9" ref="1">
    <original>N</original>
    <variation>S</variation>
    <location>
        <position position="212"/>
    </location>
</feature>
<feature type="sequence conflict" description="In Ref. 1; AAB53836." evidence="9" ref="1">
    <original>I</original>
    <variation>T</variation>
    <location>
        <position position="477"/>
    </location>
</feature>
<feature type="sequence conflict" description="In Ref. 1; AAB53836." evidence="9" ref="1">
    <original>H</original>
    <variation>Q</variation>
    <location>
        <position position="905"/>
    </location>
</feature>
<feature type="strand" evidence="11">
    <location>
        <begin position="958"/>
        <end position="960"/>
    </location>
</feature>
<feature type="helix" evidence="11">
    <location>
        <begin position="965"/>
        <end position="971"/>
    </location>
</feature>
<feature type="helix" evidence="11">
    <location>
        <begin position="975"/>
        <end position="977"/>
    </location>
</feature>
<feature type="helix" evidence="11">
    <location>
        <begin position="978"/>
        <end position="983"/>
    </location>
</feature>
<feature type="helix" evidence="11">
    <location>
        <begin position="989"/>
        <end position="992"/>
    </location>
</feature>
<feature type="helix" evidence="11">
    <location>
        <begin position="997"/>
        <end position="1002"/>
    </location>
</feature>
<feature type="helix" evidence="11">
    <location>
        <begin position="1008"/>
        <end position="1031"/>
    </location>
</feature>
<name>EPHA6_MOUSE</name>
<proteinExistence type="evidence at protein level"/>
<evidence type="ECO:0000250" key="1"/>
<evidence type="ECO:0000255" key="2"/>
<evidence type="ECO:0000255" key="3">
    <source>
        <dbReference type="PROSITE-ProRule" id="PRU00159"/>
    </source>
</evidence>
<evidence type="ECO:0000255" key="4">
    <source>
        <dbReference type="PROSITE-ProRule" id="PRU00184"/>
    </source>
</evidence>
<evidence type="ECO:0000255" key="5">
    <source>
        <dbReference type="PROSITE-ProRule" id="PRU00316"/>
    </source>
</evidence>
<evidence type="ECO:0000255" key="6">
    <source>
        <dbReference type="PROSITE-ProRule" id="PRU00883"/>
    </source>
</evidence>
<evidence type="ECO:0000255" key="7">
    <source>
        <dbReference type="PROSITE-ProRule" id="PRU10028"/>
    </source>
</evidence>
<evidence type="ECO:0000269" key="8">
    <source>
    </source>
</evidence>
<evidence type="ECO:0000305" key="9"/>
<evidence type="ECO:0007744" key="10">
    <source>
        <dbReference type="PDB" id="5ZRY"/>
    </source>
</evidence>
<evidence type="ECO:0007829" key="11">
    <source>
        <dbReference type="PDB" id="5ZRY"/>
    </source>
</evidence>
<organism>
    <name type="scientific">Mus musculus</name>
    <name type="common">Mouse</name>
    <dbReference type="NCBI Taxonomy" id="10090"/>
    <lineage>
        <taxon>Eukaryota</taxon>
        <taxon>Metazoa</taxon>
        <taxon>Chordata</taxon>
        <taxon>Craniata</taxon>
        <taxon>Vertebrata</taxon>
        <taxon>Euteleostomi</taxon>
        <taxon>Mammalia</taxon>
        <taxon>Eutheria</taxon>
        <taxon>Euarchontoglires</taxon>
        <taxon>Glires</taxon>
        <taxon>Rodentia</taxon>
        <taxon>Myomorpha</taxon>
        <taxon>Muroidea</taxon>
        <taxon>Muridae</taxon>
        <taxon>Murinae</taxon>
        <taxon>Mus</taxon>
        <taxon>Mus</taxon>
    </lineage>
</organism>
<sequence>MGGCEVREFLLQFGFFLPLLTAWTGDCSHVSNQVVLLDTTTVMGELGWKTYPLNGWDAITEMDEHNRPIHTYQVCNVMEPNQNNWLRTNWISRDAAQKIYVEMKFTLRDCNSIPWVLGTCKETFNLYYIESDESHGTKFKPSQYIKIDTIAADESFTQMDLGDRILKLNTEIREVGPIERKGFYLAFQDIGACIALVSVRVFYKKCPFTVRNLAMFPDTIPRVDSSSLVEVRGSCVKSAEERDTPKLYCGADGDWLVPLGRCICSTGYEEIEGSCHACRPGFYKAFAGNTKCSKCPPHSSTYVEATSVCHCEKGYFRAEKDPPSMACTRPPSAPRNVAFNINETALILEWSPPSDTGGRKDLTYSVICKKCGLDTTQCEDCGGGLRFIPRHTGLINNSVVVLDFVSHVNYTFEIEAMNGVSELSISPKPFTAITVTTDHDAPSLIGMMRKDWASQNSLALSWQAPAFSNGAILDYEIKYYEKEHEQLTYSSTRSKAPSVIVTGLKPATTYIFHIRVRTATGYSGYSQKFEFETGDETSDMAAEQGQILVIATAAVGGFTLLVILTLFFLITGRCQWYIKAKMKSEEKRRTHLQNGHLRFPGIKTYIDPDTYEDPSLAVHEFAKEIDPSRIRIERVIGAGEFGEVCSGRLKTPGKREIPVAIKTLKGGHMDRQRRDFLREASIMGQFDHPNIIRLEGVVTKRSFPAIGVEAFCPSFLRAGFLNGIQAPHPVTAGGSLPPRIPAGRPVMIVVEYMENGSLDSFLRKHDGHFTVIQLVGMLRGIASGMKYLSDMGYVHRDLAARNILVNSNLVCKVSDFGLSRVLEDDPEAAYTTTGGKIPIRWTAPEAIAYRKFSSASDAWSYGIVMWEVMSYGERPYWEMSNQDVILSIEEGYRLPAPMGCPPSLHQLMLHCWQKERNHRPKFTDIVSFLDKLIRNPSALHTLVEDILVMPESPGDVPEYPLFVTVGDWLDSIKMGQYKSNFMAAGFTTFDLISRMSIDDIRRIGVILIGHQRRIVSSIQTLRLHMMHIQEKGFHV</sequence>
<protein>
    <recommendedName>
        <fullName>Ephrin type-A receptor 6</fullName>
        <ecNumber>2.7.10.1</ecNumber>
    </recommendedName>
    <alternativeName>
        <fullName>EPH homology kinase 2</fullName>
        <shortName>EHK-2</shortName>
    </alternativeName>
</protein>
<reference key="1">
    <citation type="journal article" date="1996" name="DNA Cell Biol.">
        <title>Cloning of m-ehk2 from the murine inner ear, an eph family receptor tyrosine kinase expressed in the developing and adult cochlea.</title>
        <authorList>
            <person name="Lee A.M."/>
            <person name="Navaratnam D."/>
            <person name="Ichimiya S."/>
            <person name="Greene M.I."/>
            <person name="Davis J.G."/>
        </authorList>
    </citation>
    <scope>NUCLEOTIDE SEQUENCE [MRNA]</scope>
    <source>
        <strain>BALB/cJ</strain>
    </source>
</reference>
<reference key="2">
    <citation type="submission" date="2005-07" db="EMBL/GenBank/DDBJ databases">
        <authorList>
            <person name="Mural R.J."/>
            <person name="Adams M.D."/>
            <person name="Myers E.W."/>
            <person name="Smith H.O."/>
            <person name="Venter J.C."/>
        </authorList>
    </citation>
    <scope>NUCLEOTIDE SEQUENCE [LARGE SCALE GENOMIC DNA]</scope>
</reference>
<reference key="3">
    <citation type="journal article" date="2004" name="Genome Res.">
        <title>The status, quality, and expansion of the NIH full-length cDNA project: the Mammalian Gene Collection (MGC).</title>
        <authorList>
            <consortium name="The MGC Project Team"/>
        </authorList>
    </citation>
    <scope>NUCLEOTIDE SEQUENCE [LARGE SCALE MRNA]</scope>
    <source>
        <tissue>Brain</tissue>
    </source>
</reference>
<reference key="4">
    <citation type="journal article" date="2005" name="Science">
        <title>The transcriptional landscape of the mammalian genome.</title>
        <authorList>
            <person name="Carninci P."/>
            <person name="Kasukawa T."/>
            <person name="Katayama S."/>
            <person name="Gough J."/>
            <person name="Frith M.C."/>
            <person name="Maeda N."/>
            <person name="Oyama R."/>
            <person name="Ravasi T."/>
            <person name="Lenhard B."/>
            <person name="Wells C."/>
            <person name="Kodzius R."/>
            <person name="Shimokawa K."/>
            <person name="Bajic V.B."/>
            <person name="Brenner S.E."/>
            <person name="Batalov S."/>
            <person name="Forrest A.R."/>
            <person name="Zavolan M."/>
            <person name="Davis M.J."/>
            <person name="Wilming L.G."/>
            <person name="Aidinis V."/>
            <person name="Allen J.E."/>
            <person name="Ambesi-Impiombato A."/>
            <person name="Apweiler R."/>
            <person name="Aturaliya R.N."/>
            <person name="Bailey T.L."/>
            <person name="Bansal M."/>
            <person name="Baxter L."/>
            <person name="Beisel K.W."/>
            <person name="Bersano T."/>
            <person name="Bono H."/>
            <person name="Chalk A.M."/>
            <person name="Chiu K.P."/>
            <person name="Choudhary V."/>
            <person name="Christoffels A."/>
            <person name="Clutterbuck D.R."/>
            <person name="Crowe M.L."/>
            <person name="Dalla E."/>
            <person name="Dalrymple B.P."/>
            <person name="de Bono B."/>
            <person name="Della Gatta G."/>
            <person name="di Bernardo D."/>
            <person name="Down T."/>
            <person name="Engstrom P."/>
            <person name="Fagiolini M."/>
            <person name="Faulkner G."/>
            <person name="Fletcher C.F."/>
            <person name="Fukushima T."/>
            <person name="Furuno M."/>
            <person name="Futaki S."/>
            <person name="Gariboldi M."/>
            <person name="Georgii-Hemming P."/>
            <person name="Gingeras T.R."/>
            <person name="Gojobori T."/>
            <person name="Green R.E."/>
            <person name="Gustincich S."/>
            <person name="Harbers M."/>
            <person name="Hayashi Y."/>
            <person name="Hensch T.K."/>
            <person name="Hirokawa N."/>
            <person name="Hill D."/>
            <person name="Huminiecki L."/>
            <person name="Iacono M."/>
            <person name="Ikeo K."/>
            <person name="Iwama A."/>
            <person name="Ishikawa T."/>
            <person name="Jakt M."/>
            <person name="Kanapin A."/>
            <person name="Katoh M."/>
            <person name="Kawasawa Y."/>
            <person name="Kelso J."/>
            <person name="Kitamura H."/>
            <person name="Kitano H."/>
            <person name="Kollias G."/>
            <person name="Krishnan S.P."/>
            <person name="Kruger A."/>
            <person name="Kummerfeld S.K."/>
            <person name="Kurochkin I.V."/>
            <person name="Lareau L.F."/>
            <person name="Lazarevic D."/>
            <person name="Lipovich L."/>
            <person name="Liu J."/>
            <person name="Liuni S."/>
            <person name="McWilliam S."/>
            <person name="Madan Babu M."/>
            <person name="Madera M."/>
            <person name="Marchionni L."/>
            <person name="Matsuda H."/>
            <person name="Matsuzawa S."/>
            <person name="Miki H."/>
            <person name="Mignone F."/>
            <person name="Miyake S."/>
            <person name="Morris K."/>
            <person name="Mottagui-Tabar S."/>
            <person name="Mulder N."/>
            <person name="Nakano N."/>
            <person name="Nakauchi H."/>
            <person name="Ng P."/>
            <person name="Nilsson R."/>
            <person name="Nishiguchi S."/>
            <person name="Nishikawa S."/>
            <person name="Nori F."/>
            <person name="Ohara O."/>
            <person name="Okazaki Y."/>
            <person name="Orlando V."/>
            <person name="Pang K.C."/>
            <person name="Pavan W.J."/>
            <person name="Pavesi G."/>
            <person name="Pesole G."/>
            <person name="Petrovsky N."/>
            <person name="Piazza S."/>
            <person name="Reed J."/>
            <person name="Reid J.F."/>
            <person name="Ring B.Z."/>
            <person name="Ringwald M."/>
            <person name="Rost B."/>
            <person name="Ruan Y."/>
            <person name="Salzberg S.L."/>
            <person name="Sandelin A."/>
            <person name="Schneider C."/>
            <person name="Schoenbach C."/>
            <person name="Sekiguchi K."/>
            <person name="Semple C.A."/>
            <person name="Seno S."/>
            <person name="Sessa L."/>
            <person name="Sheng Y."/>
            <person name="Shibata Y."/>
            <person name="Shimada H."/>
            <person name="Shimada K."/>
            <person name="Silva D."/>
            <person name="Sinclair B."/>
            <person name="Sperling S."/>
            <person name="Stupka E."/>
            <person name="Sugiura K."/>
            <person name="Sultana R."/>
            <person name="Takenaka Y."/>
            <person name="Taki K."/>
            <person name="Tammoja K."/>
            <person name="Tan S.L."/>
            <person name="Tang S."/>
            <person name="Taylor M.S."/>
            <person name="Tegner J."/>
            <person name="Teichmann S.A."/>
            <person name="Ueda H.R."/>
            <person name="van Nimwegen E."/>
            <person name="Verardo R."/>
            <person name="Wei C.L."/>
            <person name="Yagi K."/>
            <person name="Yamanishi H."/>
            <person name="Zabarovsky E."/>
            <person name="Zhu S."/>
            <person name="Zimmer A."/>
            <person name="Hide W."/>
            <person name="Bult C."/>
            <person name="Grimmond S.M."/>
            <person name="Teasdale R.D."/>
            <person name="Liu E.T."/>
            <person name="Brusic V."/>
            <person name="Quackenbush J."/>
            <person name="Wahlestedt C."/>
            <person name="Mattick J.S."/>
            <person name="Hume D.A."/>
            <person name="Kai C."/>
            <person name="Sasaki D."/>
            <person name="Tomaru Y."/>
            <person name="Fukuda S."/>
            <person name="Kanamori-Katayama M."/>
            <person name="Suzuki M."/>
            <person name="Aoki J."/>
            <person name="Arakawa T."/>
            <person name="Iida J."/>
            <person name="Imamura K."/>
            <person name="Itoh M."/>
            <person name="Kato T."/>
            <person name="Kawaji H."/>
            <person name="Kawagashira N."/>
            <person name="Kawashima T."/>
            <person name="Kojima M."/>
            <person name="Kondo S."/>
            <person name="Konno H."/>
            <person name="Nakano K."/>
            <person name="Ninomiya N."/>
            <person name="Nishio T."/>
            <person name="Okada M."/>
            <person name="Plessy C."/>
            <person name="Shibata K."/>
            <person name="Shiraki T."/>
            <person name="Suzuki S."/>
            <person name="Tagami M."/>
            <person name="Waki K."/>
            <person name="Watahiki A."/>
            <person name="Okamura-Oho Y."/>
            <person name="Suzuki H."/>
            <person name="Kawai J."/>
            <person name="Hayashizaki Y."/>
        </authorList>
    </citation>
    <scope>NUCLEOTIDE SEQUENCE [LARGE SCALE MRNA] OF 397-1035</scope>
    <source>
        <strain>C57BL/6J</strain>
        <tissue>Olfactory bulb</tissue>
    </source>
</reference>
<reference evidence="10" key="5">
    <citation type="journal article" date="2018" name="Elife">
        <title>Specific Eph receptor-cytoplasmic effector signaling mediated by SAM-SAM domain interactions.</title>
        <authorList>
            <person name="Wang Y."/>
            <person name="Shang Y."/>
            <person name="Li J."/>
            <person name="Chen W."/>
            <person name="Li G."/>
            <person name="Wan J."/>
            <person name="Liu W."/>
            <person name="Zhang M."/>
        </authorList>
    </citation>
    <scope>X-RAY CRYSTALLOGRAPHY (1.30 ANGSTROMS) OF 957-1035 IN COMPLEX WITH ANKS1A</scope>
</reference>
<accession>Q62413</accession>
<accession>B9EIV2</accession>
<accession>Q8CCN2</accession>
<dbReference type="EC" id="2.7.10.1"/>
<dbReference type="EMBL" id="U58332">
    <property type="protein sequence ID" value="AAB53836.1"/>
    <property type="molecule type" value="mRNA"/>
</dbReference>
<dbReference type="EMBL" id="CH466521">
    <property type="protein sequence ID" value="EDK98232.1"/>
    <property type="molecule type" value="Genomic_DNA"/>
</dbReference>
<dbReference type="EMBL" id="BC141090">
    <property type="protein sequence ID" value="AAI41091.1"/>
    <property type="molecule type" value="mRNA"/>
</dbReference>
<dbReference type="EMBL" id="AK032436">
    <property type="protein sequence ID" value="BAC27868.1"/>
    <property type="molecule type" value="mRNA"/>
</dbReference>
<dbReference type="PDB" id="5ZRY">
    <property type="method" value="X-ray"/>
    <property type="resolution" value="1.30 A"/>
    <property type="chains" value="A/B=957-1035"/>
</dbReference>
<dbReference type="PDBsum" id="5ZRY"/>
<dbReference type="SMR" id="Q62413"/>
<dbReference type="FunCoup" id="Q62413">
    <property type="interactions" value="188"/>
</dbReference>
<dbReference type="STRING" id="10090.ENSMUSP00000066734"/>
<dbReference type="BindingDB" id="Q62413"/>
<dbReference type="ChEMBL" id="CHEMBL4739690"/>
<dbReference type="GuidetoPHARMACOLOGY" id="1826"/>
<dbReference type="GlyCosmos" id="Q62413">
    <property type="glycosylation" value="3 sites, No reported glycans"/>
</dbReference>
<dbReference type="GlyGen" id="Q62413">
    <property type="glycosylation" value="3 sites"/>
</dbReference>
<dbReference type="iPTMnet" id="Q62413"/>
<dbReference type="PhosphoSitePlus" id="Q62413"/>
<dbReference type="PaxDb" id="10090-ENSMUSP00000066734"/>
<dbReference type="ProteomicsDB" id="275626"/>
<dbReference type="UCSC" id="uc012agy.1">
    <property type="organism name" value="mouse"/>
</dbReference>
<dbReference type="AGR" id="MGI:108034"/>
<dbReference type="MGI" id="MGI:108034">
    <property type="gene designation" value="Epha6"/>
</dbReference>
<dbReference type="eggNOG" id="KOG0196">
    <property type="taxonomic scope" value="Eukaryota"/>
</dbReference>
<dbReference type="InParanoid" id="Q62413"/>
<dbReference type="BRENDA" id="2.7.10.1">
    <property type="organism ID" value="3474"/>
</dbReference>
<dbReference type="Reactome" id="R-MMU-2682334">
    <property type="pathway name" value="EPH-Ephrin signaling"/>
</dbReference>
<dbReference type="Reactome" id="R-MMU-3928663">
    <property type="pathway name" value="EPHA-mediated growth cone collapse"/>
</dbReference>
<dbReference type="Reactome" id="R-MMU-3928665">
    <property type="pathway name" value="EPH-ephrin mediated repulsion of cells"/>
</dbReference>
<dbReference type="ChiTaRS" id="Epha6">
    <property type="organism name" value="mouse"/>
</dbReference>
<dbReference type="PRO" id="PR:Q62413"/>
<dbReference type="Proteomes" id="UP000000589">
    <property type="component" value="Unplaced"/>
</dbReference>
<dbReference type="RNAct" id="Q62413">
    <property type="molecule type" value="protein"/>
</dbReference>
<dbReference type="GO" id="GO:0005886">
    <property type="term" value="C:plasma membrane"/>
    <property type="evidence" value="ECO:0007669"/>
    <property type="project" value="InterPro"/>
</dbReference>
<dbReference type="GO" id="GO:0005524">
    <property type="term" value="F:ATP binding"/>
    <property type="evidence" value="ECO:0007669"/>
    <property type="project" value="UniProtKB-KW"/>
</dbReference>
<dbReference type="GO" id="GO:0005003">
    <property type="term" value="F:ephrin receptor activity"/>
    <property type="evidence" value="ECO:0007669"/>
    <property type="project" value="InterPro"/>
</dbReference>
<dbReference type="CDD" id="cd10484">
    <property type="entry name" value="EphR_LBD_A6"/>
    <property type="match status" value="1"/>
</dbReference>
<dbReference type="CDD" id="cd00063">
    <property type="entry name" value="FN3"/>
    <property type="match status" value="2"/>
</dbReference>
<dbReference type="CDD" id="cd05066">
    <property type="entry name" value="PTKc_EphR_A"/>
    <property type="match status" value="1"/>
</dbReference>
<dbReference type="CDD" id="cd09547">
    <property type="entry name" value="SAM_EPH-A6"/>
    <property type="match status" value="1"/>
</dbReference>
<dbReference type="FunFam" id="1.10.510.10:FF:000083">
    <property type="entry name" value="Ephrin type-A receptor 3"/>
    <property type="match status" value="1"/>
</dbReference>
<dbReference type="FunFam" id="1.10.150.50:FF:000001">
    <property type="entry name" value="Ephrin type-A receptor 5"/>
    <property type="match status" value="1"/>
</dbReference>
<dbReference type="FunFam" id="2.10.50.10:FF:000001">
    <property type="entry name" value="Ephrin type-A receptor 5"/>
    <property type="match status" value="1"/>
</dbReference>
<dbReference type="FunFam" id="2.60.40.1770:FF:000001">
    <property type="entry name" value="Ephrin type-A receptor 5"/>
    <property type="match status" value="1"/>
</dbReference>
<dbReference type="FunFam" id="3.30.200.20:FF:000001">
    <property type="entry name" value="Ephrin type-A receptor 5"/>
    <property type="match status" value="1"/>
</dbReference>
<dbReference type="FunFam" id="2.60.40.10:FF:001184">
    <property type="entry name" value="Ephrin type-A receptor 6"/>
    <property type="match status" value="1"/>
</dbReference>
<dbReference type="FunFam" id="2.60.120.260:FF:000001">
    <property type="entry name" value="Ephrin type-A receptor 7"/>
    <property type="match status" value="1"/>
</dbReference>
<dbReference type="FunFam" id="2.60.40.10:FF:000190">
    <property type="entry name" value="Ephrin type-A receptor 7"/>
    <property type="match status" value="1"/>
</dbReference>
<dbReference type="Gene3D" id="2.60.40.1770">
    <property type="entry name" value="ephrin a2 ectodomain"/>
    <property type="match status" value="1"/>
</dbReference>
<dbReference type="Gene3D" id="2.60.120.260">
    <property type="entry name" value="Galactose-binding domain-like"/>
    <property type="match status" value="1"/>
</dbReference>
<dbReference type="Gene3D" id="2.60.40.10">
    <property type="entry name" value="Immunoglobulins"/>
    <property type="match status" value="2"/>
</dbReference>
<dbReference type="Gene3D" id="3.30.200.20">
    <property type="entry name" value="Phosphorylase Kinase, domain 1"/>
    <property type="match status" value="1"/>
</dbReference>
<dbReference type="Gene3D" id="1.10.150.50">
    <property type="entry name" value="Transcription Factor, Ets-1"/>
    <property type="match status" value="1"/>
</dbReference>
<dbReference type="Gene3D" id="1.10.510.10">
    <property type="entry name" value="Transferase(Phosphotransferase) domain 1"/>
    <property type="match status" value="1"/>
</dbReference>
<dbReference type="Gene3D" id="2.10.50.10">
    <property type="entry name" value="Tumor Necrosis Factor Receptor, subunit A, domain 2"/>
    <property type="match status" value="1"/>
</dbReference>
<dbReference type="InterPro" id="IPR042746">
    <property type="entry name" value="EPH-A6_SAM"/>
</dbReference>
<dbReference type="InterPro" id="IPR027936">
    <property type="entry name" value="Eph_TM"/>
</dbReference>
<dbReference type="InterPro" id="IPR034280">
    <property type="entry name" value="EphA6_rcpt_lig-bd"/>
</dbReference>
<dbReference type="InterPro" id="IPR001090">
    <property type="entry name" value="Ephrin_rcpt_lig-bd_dom"/>
</dbReference>
<dbReference type="InterPro" id="IPR050449">
    <property type="entry name" value="Ephrin_rcpt_TKs"/>
</dbReference>
<dbReference type="InterPro" id="IPR003961">
    <property type="entry name" value="FN3_dom"/>
</dbReference>
<dbReference type="InterPro" id="IPR036116">
    <property type="entry name" value="FN3_sf"/>
</dbReference>
<dbReference type="InterPro" id="IPR008979">
    <property type="entry name" value="Galactose-bd-like_sf"/>
</dbReference>
<dbReference type="InterPro" id="IPR009030">
    <property type="entry name" value="Growth_fac_rcpt_cys_sf"/>
</dbReference>
<dbReference type="InterPro" id="IPR013783">
    <property type="entry name" value="Ig-like_fold"/>
</dbReference>
<dbReference type="InterPro" id="IPR011009">
    <property type="entry name" value="Kinase-like_dom_sf"/>
</dbReference>
<dbReference type="InterPro" id="IPR000719">
    <property type="entry name" value="Prot_kinase_dom"/>
</dbReference>
<dbReference type="InterPro" id="IPR017441">
    <property type="entry name" value="Protein_kinase_ATP_BS"/>
</dbReference>
<dbReference type="InterPro" id="IPR001660">
    <property type="entry name" value="SAM"/>
</dbReference>
<dbReference type="InterPro" id="IPR013761">
    <property type="entry name" value="SAM/pointed_sf"/>
</dbReference>
<dbReference type="InterPro" id="IPR001245">
    <property type="entry name" value="Ser-Thr/Tyr_kinase_cat_dom"/>
</dbReference>
<dbReference type="InterPro" id="IPR011641">
    <property type="entry name" value="Tyr-kin_ephrin_A/B_rcpt-like"/>
</dbReference>
<dbReference type="InterPro" id="IPR008266">
    <property type="entry name" value="Tyr_kinase_AS"/>
</dbReference>
<dbReference type="InterPro" id="IPR020635">
    <property type="entry name" value="Tyr_kinase_cat_dom"/>
</dbReference>
<dbReference type="InterPro" id="IPR016257">
    <property type="entry name" value="Tyr_kinase_ephrin_rcpt"/>
</dbReference>
<dbReference type="InterPro" id="IPR001426">
    <property type="entry name" value="Tyr_kinase_rcpt_V_CS"/>
</dbReference>
<dbReference type="PANTHER" id="PTHR46877">
    <property type="entry name" value="EPH RECEPTOR A5"/>
    <property type="match status" value="1"/>
</dbReference>
<dbReference type="PANTHER" id="PTHR46877:SF10">
    <property type="entry name" value="EPHRIN TYPE-A RECEPTOR 6"/>
    <property type="match status" value="1"/>
</dbReference>
<dbReference type="Pfam" id="PF14575">
    <property type="entry name" value="EphA2_TM"/>
    <property type="match status" value="1"/>
</dbReference>
<dbReference type="Pfam" id="PF01404">
    <property type="entry name" value="Ephrin_lbd"/>
    <property type="match status" value="1"/>
</dbReference>
<dbReference type="Pfam" id="PF07699">
    <property type="entry name" value="Ephrin_rec_like"/>
    <property type="match status" value="1"/>
</dbReference>
<dbReference type="Pfam" id="PF00041">
    <property type="entry name" value="fn3"/>
    <property type="match status" value="2"/>
</dbReference>
<dbReference type="Pfam" id="PF07714">
    <property type="entry name" value="PK_Tyr_Ser-Thr"/>
    <property type="match status" value="2"/>
</dbReference>
<dbReference type="Pfam" id="PF00536">
    <property type="entry name" value="SAM_1"/>
    <property type="match status" value="1"/>
</dbReference>
<dbReference type="PIRSF" id="PIRSF000666">
    <property type="entry name" value="TyrPK_ephrin_receptor"/>
    <property type="match status" value="1"/>
</dbReference>
<dbReference type="PRINTS" id="PR00014">
    <property type="entry name" value="FNTYPEIII"/>
</dbReference>
<dbReference type="PRINTS" id="PR00109">
    <property type="entry name" value="TYRKINASE"/>
</dbReference>
<dbReference type="SMART" id="SM00615">
    <property type="entry name" value="EPH_lbd"/>
    <property type="match status" value="1"/>
</dbReference>
<dbReference type="SMART" id="SM01411">
    <property type="entry name" value="Ephrin_rec_like"/>
    <property type="match status" value="1"/>
</dbReference>
<dbReference type="SMART" id="SM00060">
    <property type="entry name" value="FN3"/>
    <property type="match status" value="2"/>
</dbReference>
<dbReference type="SMART" id="SM00454">
    <property type="entry name" value="SAM"/>
    <property type="match status" value="1"/>
</dbReference>
<dbReference type="SMART" id="SM00219">
    <property type="entry name" value="TyrKc"/>
    <property type="match status" value="1"/>
</dbReference>
<dbReference type="SUPFAM" id="SSF49265">
    <property type="entry name" value="Fibronectin type III"/>
    <property type="match status" value="1"/>
</dbReference>
<dbReference type="SUPFAM" id="SSF49785">
    <property type="entry name" value="Galactose-binding domain-like"/>
    <property type="match status" value="1"/>
</dbReference>
<dbReference type="SUPFAM" id="SSF57184">
    <property type="entry name" value="Growth factor receptor domain"/>
    <property type="match status" value="1"/>
</dbReference>
<dbReference type="SUPFAM" id="SSF56112">
    <property type="entry name" value="Protein kinase-like (PK-like)"/>
    <property type="match status" value="1"/>
</dbReference>
<dbReference type="SUPFAM" id="SSF47769">
    <property type="entry name" value="SAM/Pointed domain"/>
    <property type="match status" value="1"/>
</dbReference>
<dbReference type="PROSITE" id="PS51550">
    <property type="entry name" value="EPH_LBD"/>
    <property type="match status" value="1"/>
</dbReference>
<dbReference type="PROSITE" id="PS50853">
    <property type="entry name" value="FN3"/>
    <property type="match status" value="2"/>
</dbReference>
<dbReference type="PROSITE" id="PS00107">
    <property type="entry name" value="PROTEIN_KINASE_ATP"/>
    <property type="match status" value="1"/>
</dbReference>
<dbReference type="PROSITE" id="PS50011">
    <property type="entry name" value="PROTEIN_KINASE_DOM"/>
    <property type="match status" value="1"/>
</dbReference>
<dbReference type="PROSITE" id="PS00109">
    <property type="entry name" value="PROTEIN_KINASE_TYR"/>
    <property type="match status" value="1"/>
</dbReference>
<dbReference type="PROSITE" id="PS00790">
    <property type="entry name" value="RECEPTOR_TYR_KIN_V_1"/>
    <property type="match status" value="1"/>
</dbReference>
<dbReference type="PROSITE" id="PS00791">
    <property type="entry name" value="RECEPTOR_TYR_KIN_V_2"/>
    <property type="match status" value="1"/>
</dbReference>
<dbReference type="PROSITE" id="PS50105">
    <property type="entry name" value="SAM_DOMAIN"/>
    <property type="match status" value="1"/>
</dbReference>
<gene>
    <name type="primary">Epha6</name>
    <name type="synonym">Ehk-2</name>
    <name type="synonym">Ehk2</name>
</gene>
<comment type="function">
    <text evidence="1">Receptor tyrosine kinase which binds promiscuously GPI-anchored ephrin-A family ligands residing on adjacent cells, leading to contact-dependent bidirectional signaling into neighboring cells. The signaling pathway downstream of the receptor is referred to as forward signaling while the signaling pathway downstream of the ephrin ligand is referred to as reverse signaling (By similarity).</text>
</comment>
<comment type="catalytic activity">
    <reaction evidence="7">
        <text>L-tyrosyl-[protein] + ATP = O-phospho-L-tyrosyl-[protein] + ADP + H(+)</text>
        <dbReference type="Rhea" id="RHEA:10596"/>
        <dbReference type="Rhea" id="RHEA-COMP:10136"/>
        <dbReference type="Rhea" id="RHEA-COMP:20101"/>
        <dbReference type="ChEBI" id="CHEBI:15378"/>
        <dbReference type="ChEBI" id="CHEBI:30616"/>
        <dbReference type="ChEBI" id="CHEBI:46858"/>
        <dbReference type="ChEBI" id="CHEBI:61978"/>
        <dbReference type="ChEBI" id="CHEBI:456216"/>
        <dbReference type="EC" id="2.7.10.1"/>
    </reaction>
</comment>
<comment type="subunit">
    <text evidence="1 8">Heterotetramer upon binding of the ligand. The heterotetramer is composed of an ephrin dimer and a receptor dimer. Oligomerization is probably required to induce biological responses (By similarity). Interacts (via SAM domain) with ANKS1A (via SAM domain) (PubMed:29749928).</text>
</comment>
<comment type="subcellular location">
    <subcellularLocation>
        <location>Membrane</location>
        <topology>Single-pass type I membrane protein</topology>
    </subcellularLocation>
</comment>
<comment type="similarity">
    <text evidence="3">Belongs to the protein kinase superfamily. Tyr protein kinase family. Ephrin receptor subfamily.</text>
</comment>
<keyword id="KW-0002">3D-structure</keyword>
<keyword id="KW-0067">ATP-binding</keyword>
<keyword id="KW-0325">Glycoprotein</keyword>
<keyword id="KW-0418">Kinase</keyword>
<keyword id="KW-0472">Membrane</keyword>
<keyword id="KW-0547">Nucleotide-binding</keyword>
<keyword id="KW-0597">Phosphoprotein</keyword>
<keyword id="KW-0675">Receptor</keyword>
<keyword id="KW-1185">Reference proteome</keyword>
<keyword id="KW-0677">Repeat</keyword>
<keyword id="KW-0732">Signal</keyword>
<keyword id="KW-0808">Transferase</keyword>
<keyword id="KW-0812">Transmembrane</keyword>
<keyword id="KW-1133">Transmembrane helix</keyword>
<keyword id="KW-0829">Tyrosine-protein kinase</keyword>